<gene>
    <name evidence="1" type="primary">rpsI</name>
    <name type="ordered locus">Maqu_2471</name>
</gene>
<dbReference type="EMBL" id="CP000514">
    <property type="protein sequence ID" value="ABM19546.1"/>
    <property type="molecule type" value="Genomic_DNA"/>
</dbReference>
<dbReference type="RefSeq" id="WP_011785930.1">
    <property type="nucleotide sequence ID" value="NC_008740.1"/>
</dbReference>
<dbReference type="SMR" id="A1U3H7"/>
<dbReference type="STRING" id="351348.Maqu_2471"/>
<dbReference type="GeneID" id="31820275"/>
<dbReference type="KEGG" id="maq:Maqu_2471"/>
<dbReference type="eggNOG" id="COG0103">
    <property type="taxonomic scope" value="Bacteria"/>
</dbReference>
<dbReference type="HOGENOM" id="CLU_046483_2_1_6"/>
<dbReference type="OrthoDB" id="9803965at2"/>
<dbReference type="Proteomes" id="UP000000998">
    <property type="component" value="Chromosome"/>
</dbReference>
<dbReference type="GO" id="GO:0022627">
    <property type="term" value="C:cytosolic small ribosomal subunit"/>
    <property type="evidence" value="ECO:0007669"/>
    <property type="project" value="TreeGrafter"/>
</dbReference>
<dbReference type="GO" id="GO:0003723">
    <property type="term" value="F:RNA binding"/>
    <property type="evidence" value="ECO:0007669"/>
    <property type="project" value="TreeGrafter"/>
</dbReference>
<dbReference type="GO" id="GO:0003735">
    <property type="term" value="F:structural constituent of ribosome"/>
    <property type="evidence" value="ECO:0007669"/>
    <property type="project" value="InterPro"/>
</dbReference>
<dbReference type="GO" id="GO:0006412">
    <property type="term" value="P:translation"/>
    <property type="evidence" value="ECO:0007669"/>
    <property type="project" value="UniProtKB-UniRule"/>
</dbReference>
<dbReference type="FunFam" id="3.30.230.10:FF:000001">
    <property type="entry name" value="30S ribosomal protein S9"/>
    <property type="match status" value="1"/>
</dbReference>
<dbReference type="Gene3D" id="3.30.230.10">
    <property type="match status" value="1"/>
</dbReference>
<dbReference type="HAMAP" id="MF_00532_B">
    <property type="entry name" value="Ribosomal_uS9_B"/>
    <property type="match status" value="1"/>
</dbReference>
<dbReference type="InterPro" id="IPR020568">
    <property type="entry name" value="Ribosomal_Su5_D2-typ_SF"/>
</dbReference>
<dbReference type="InterPro" id="IPR000754">
    <property type="entry name" value="Ribosomal_uS9"/>
</dbReference>
<dbReference type="InterPro" id="IPR023035">
    <property type="entry name" value="Ribosomal_uS9_bac/plastid"/>
</dbReference>
<dbReference type="InterPro" id="IPR020574">
    <property type="entry name" value="Ribosomal_uS9_CS"/>
</dbReference>
<dbReference type="InterPro" id="IPR014721">
    <property type="entry name" value="Ribsml_uS5_D2-typ_fold_subgr"/>
</dbReference>
<dbReference type="NCBIfam" id="NF001099">
    <property type="entry name" value="PRK00132.1"/>
    <property type="match status" value="1"/>
</dbReference>
<dbReference type="PANTHER" id="PTHR21569">
    <property type="entry name" value="RIBOSOMAL PROTEIN S9"/>
    <property type="match status" value="1"/>
</dbReference>
<dbReference type="PANTHER" id="PTHR21569:SF1">
    <property type="entry name" value="SMALL RIBOSOMAL SUBUNIT PROTEIN US9M"/>
    <property type="match status" value="1"/>
</dbReference>
<dbReference type="Pfam" id="PF00380">
    <property type="entry name" value="Ribosomal_S9"/>
    <property type="match status" value="1"/>
</dbReference>
<dbReference type="SUPFAM" id="SSF54211">
    <property type="entry name" value="Ribosomal protein S5 domain 2-like"/>
    <property type="match status" value="1"/>
</dbReference>
<dbReference type="PROSITE" id="PS00360">
    <property type="entry name" value="RIBOSOMAL_S9"/>
    <property type="match status" value="1"/>
</dbReference>
<organism>
    <name type="scientific">Marinobacter nauticus (strain ATCC 700491 / DSM 11845 / VT8)</name>
    <name type="common">Marinobacter aquaeolei</name>
    <dbReference type="NCBI Taxonomy" id="351348"/>
    <lineage>
        <taxon>Bacteria</taxon>
        <taxon>Pseudomonadati</taxon>
        <taxon>Pseudomonadota</taxon>
        <taxon>Gammaproteobacteria</taxon>
        <taxon>Pseudomonadales</taxon>
        <taxon>Marinobacteraceae</taxon>
        <taxon>Marinobacter</taxon>
    </lineage>
</organism>
<keyword id="KW-0687">Ribonucleoprotein</keyword>
<keyword id="KW-0689">Ribosomal protein</keyword>
<evidence type="ECO:0000255" key="1">
    <source>
        <dbReference type="HAMAP-Rule" id="MF_00532"/>
    </source>
</evidence>
<evidence type="ECO:0000305" key="2"/>
<name>RS9_MARN8</name>
<accession>A1U3H7</accession>
<protein>
    <recommendedName>
        <fullName evidence="1">Small ribosomal subunit protein uS9</fullName>
    </recommendedName>
    <alternativeName>
        <fullName evidence="2">30S ribosomal protein S9</fullName>
    </alternativeName>
</protein>
<comment type="similarity">
    <text evidence="1">Belongs to the universal ribosomal protein uS9 family.</text>
</comment>
<reference key="1">
    <citation type="journal article" date="2011" name="Appl. Environ. Microbiol.">
        <title>Genomic potential of Marinobacter aquaeolei, a biogeochemical 'opportunitroph'.</title>
        <authorList>
            <person name="Singer E."/>
            <person name="Webb E.A."/>
            <person name="Nelson W.C."/>
            <person name="Heidelberg J.F."/>
            <person name="Ivanova N."/>
            <person name="Pati A."/>
            <person name="Edwards K.J."/>
        </authorList>
    </citation>
    <scope>NUCLEOTIDE SEQUENCE [LARGE SCALE GENOMIC DNA]</scope>
    <source>
        <strain>ATCC 700491 / DSM 11845 / VT8</strain>
    </source>
</reference>
<sequence length="130" mass="14537">MSVAQNYGTGRRKSSTARVFIKPGSGNISINGRTIEDFFGRETLRMIVRQPLVVAESEDRFDIAITVKGGGISGQAGAIRHGLTRALMDYDETLRPALRKAGYVTRDARKVERKKVGLRKARKRPQYSKR</sequence>
<feature type="chain" id="PRO_1000051250" description="Small ribosomal subunit protein uS9">
    <location>
        <begin position="1"/>
        <end position="130"/>
    </location>
</feature>
<proteinExistence type="inferred from homology"/>